<accession>B5YJS2</accession>
<sequence length="318" mass="36548">MSTVFIDRKDIEIRVDGNSISFYAKGKKDGSLPLSPLKRVVIVGNVKIETSVLYKLVNHGITVLFLTGKLKYSGILNGPLHNNGLLRVKQYQKSLSGFSLKFAKELIKRKIVSQRDFLSEIREIKKALAMQADRAIEILNKAISNIEVTPISIDSLRGIEGAASSIYFITYSKIFPNSLKFVRRIKRPPKDPVNAMLSLCYTLLHYEIVREIQLIGLDPTIGFYHQFEYGRESLACDLVELFRVNVDRFVYELFKAKHLGNRDFMKDEESGGVYLKKTGRKKFYPLYEQWVQQQRTIWRGEVQGFARRILEEKDIISG</sequence>
<reference key="1">
    <citation type="submission" date="2008-08" db="EMBL/GenBank/DDBJ databases">
        <title>The complete genome sequence of Thermodesulfovibrio yellowstonii strain ATCC 51303 / DSM 11347 / YP87.</title>
        <authorList>
            <person name="Dodson R.J."/>
            <person name="Durkin A.S."/>
            <person name="Wu M."/>
            <person name="Eisen J."/>
            <person name="Sutton G."/>
        </authorList>
    </citation>
    <scope>NUCLEOTIDE SEQUENCE [LARGE SCALE GENOMIC DNA]</scope>
    <source>
        <strain>ATCC 51303 / DSM 11347 / YP87</strain>
    </source>
</reference>
<proteinExistence type="inferred from homology"/>
<protein>
    <recommendedName>
        <fullName evidence="1">CRISPR-associated endonuclease Cas1 1</fullName>
        <ecNumber evidence="1">3.1.-.-</ecNumber>
    </recommendedName>
</protein>
<dbReference type="EC" id="3.1.-.-" evidence="1"/>
<dbReference type="EMBL" id="CP001147">
    <property type="protein sequence ID" value="ACI21534.1"/>
    <property type="molecule type" value="Genomic_DNA"/>
</dbReference>
<dbReference type="RefSeq" id="WP_012546247.1">
    <property type="nucleotide sequence ID" value="NC_011296.1"/>
</dbReference>
<dbReference type="RefSeq" id="YP_002248487.1">
    <property type="nucleotide sequence ID" value="NC_011296.1"/>
</dbReference>
<dbReference type="SMR" id="B5YJS2"/>
<dbReference type="STRING" id="289376.THEYE_A0644"/>
<dbReference type="EnsemblBacteria" id="ACI21534">
    <property type="protein sequence ID" value="ACI21534"/>
    <property type="gene ID" value="THEYE_A0644"/>
</dbReference>
<dbReference type="KEGG" id="tye:THEYE_A0644"/>
<dbReference type="PATRIC" id="fig|289376.4.peg.638"/>
<dbReference type="eggNOG" id="COG1518">
    <property type="taxonomic scope" value="Bacteria"/>
</dbReference>
<dbReference type="HOGENOM" id="CLU_052779_1_1_0"/>
<dbReference type="InParanoid" id="B5YJS2"/>
<dbReference type="OrthoDB" id="9803119at2"/>
<dbReference type="Proteomes" id="UP000000718">
    <property type="component" value="Chromosome"/>
</dbReference>
<dbReference type="GO" id="GO:0003677">
    <property type="term" value="F:DNA binding"/>
    <property type="evidence" value="ECO:0007669"/>
    <property type="project" value="UniProtKB-KW"/>
</dbReference>
<dbReference type="GO" id="GO:0004519">
    <property type="term" value="F:endonuclease activity"/>
    <property type="evidence" value="ECO:0000318"/>
    <property type="project" value="GO_Central"/>
</dbReference>
<dbReference type="GO" id="GO:0046872">
    <property type="term" value="F:metal ion binding"/>
    <property type="evidence" value="ECO:0007669"/>
    <property type="project" value="UniProtKB-UniRule"/>
</dbReference>
<dbReference type="GO" id="GO:0099048">
    <property type="term" value="P:CRISPR-cas system"/>
    <property type="evidence" value="ECO:0000318"/>
    <property type="project" value="GO_Central"/>
</dbReference>
<dbReference type="GO" id="GO:0051607">
    <property type="term" value="P:defense response to virus"/>
    <property type="evidence" value="ECO:0007669"/>
    <property type="project" value="UniProtKB-UniRule"/>
</dbReference>
<dbReference type="GO" id="GO:0043571">
    <property type="term" value="P:maintenance of CRISPR repeat elements"/>
    <property type="evidence" value="ECO:0000318"/>
    <property type="project" value="GO_Central"/>
</dbReference>
<dbReference type="CDD" id="cd09634">
    <property type="entry name" value="Cas1_I-II-III"/>
    <property type="match status" value="1"/>
</dbReference>
<dbReference type="Gene3D" id="1.20.120.920">
    <property type="entry name" value="CRISPR-associated endonuclease Cas1, C-terminal domain"/>
    <property type="match status" value="1"/>
</dbReference>
<dbReference type="Gene3D" id="3.100.10.20">
    <property type="entry name" value="CRISPR-associated endonuclease Cas1, N-terminal domain"/>
    <property type="match status" value="1"/>
</dbReference>
<dbReference type="HAMAP" id="MF_01470">
    <property type="entry name" value="Cas1"/>
    <property type="match status" value="1"/>
</dbReference>
<dbReference type="InterPro" id="IPR050646">
    <property type="entry name" value="Cas1"/>
</dbReference>
<dbReference type="InterPro" id="IPR002729">
    <property type="entry name" value="CRISPR-assoc_Cas1"/>
</dbReference>
<dbReference type="InterPro" id="IPR042206">
    <property type="entry name" value="CRISPR-assoc_Cas1_C"/>
</dbReference>
<dbReference type="InterPro" id="IPR042211">
    <property type="entry name" value="CRISPR-assoc_Cas1_N"/>
</dbReference>
<dbReference type="NCBIfam" id="TIGR00287">
    <property type="entry name" value="cas1"/>
    <property type="match status" value="1"/>
</dbReference>
<dbReference type="PANTHER" id="PTHR34353">
    <property type="entry name" value="CRISPR-ASSOCIATED ENDONUCLEASE CAS1 1"/>
    <property type="match status" value="1"/>
</dbReference>
<dbReference type="PANTHER" id="PTHR34353:SF2">
    <property type="entry name" value="CRISPR-ASSOCIATED ENDONUCLEASE CAS1 1"/>
    <property type="match status" value="1"/>
</dbReference>
<dbReference type="Pfam" id="PF01867">
    <property type="entry name" value="Cas_Cas1"/>
    <property type="match status" value="1"/>
</dbReference>
<gene>
    <name evidence="1" type="primary">cas1-1</name>
    <name type="ordered locus">THEYE_A0644</name>
</gene>
<organism>
    <name type="scientific">Thermodesulfovibrio yellowstonii (strain ATCC 51303 / DSM 11347 / YP87)</name>
    <dbReference type="NCBI Taxonomy" id="289376"/>
    <lineage>
        <taxon>Bacteria</taxon>
        <taxon>Pseudomonadati</taxon>
        <taxon>Nitrospirota</taxon>
        <taxon>Thermodesulfovibrionia</taxon>
        <taxon>Thermodesulfovibrionales</taxon>
        <taxon>Thermodesulfovibrionaceae</taxon>
        <taxon>Thermodesulfovibrio</taxon>
    </lineage>
</organism>
<feature type="chain" id="PRO_0000417086" description="CRISPR-associated endonuclease Cas1 1">
    <location>
        <begin position="1"/>
        <end position="318"/>
    </location>
</feature>
<feature type="binding site" evidence="1">
    <location>
        <position position="160"/>
    </location>
    <ligand>
        <name>Mn(2+)</name>
        <dbReference type="ChEBI" id="CHEBI:29035"/>
    </ligand>
</feature>
<feature type="binding site" evidence="1">
    <location>
        <position position="225"/>
    </location>
    <ligand>
        <name>Mn(2+)</name>
        <dbReference type="ChEBI" id="CHEBI:29035"/>
    </ligand>
</feature>
<feature type="binding site" evidence="1">
    <location>
        <position position="240"/>
    </location>
    <ligand>
        <name>Mn(2+)</name>
        <dbReference type="ChEBI" id="CHEBI:29035"/>
    </ligand>
</feature>
<evidence type="ECO:0000255" key="1">
    <source>
        <dbReference type="HAMAP-Rule" id="MF_01470"/>
    </source>
</evidence>
<comment type="function">
    <text evidence="1">CRISPR (clustered regularly interspaced short palindromic repeat), is an adaptive immune system that provides protection against mobile genetic elements (viruses, transposable elements and conjugative plasmids). CRISPR clusters contain spacers, sequences complementary to antecedent mobile elements, and target invading nucleic acids. CRISPR clusters are transcribed and processed into CRISPR RNA (crRNA). Acts as a dsDNA endonuclease. Involved in the integration of spacer DNA into the CRISPR cassette.</text>
</comment>
<comment type="cofactor">
    <cofactor evidence="1">
        <name>Mg(2+)</name>
        <dbReference type="ChEBI" id="CHEBI:18420"/>
    </cofactor>
    <cofactor evidence="1">
        <name>Mn(2+)</name>
        <dbReference type="ChEBI" id="CHEBI:29035"/>
    </cofactor>
</comment>
<comment type="subunit">
    <text evidence="1">Homodimer, forms a heterotetramer with a Cas2 homodimer.</text>
</comment>
<comment type="similarity">
    <text evidence="1">Belongs to the CRISPR-associated endonuclease Cas1 family.</text>
</comment>
<keyword id="KW-0051">Antiviral defense</keyword>
<keyword id="KW-0238">DNA-binding</keyword>
<keyword id="KW-0255">Endonuclease</keyword>
<keyword id="KW-0378">Hydrolase</keyword>
<keyword id="KW-0460">Magnesium</keyword>
<keyword id="KW-0464">Manganese</keyword>
<keyword id="KW-0479">Metal-binding</keyword>
<keyword id="KW-0540">Nuclease</keyword>
<keyword id="KW-1185">Reference proteome</keyword>
<name>CAS1A_THEYD</name>